<organism>
    <name type="scientific">Mus musculus</name>
    <name type="common">Mouse</name>
    <dbReference type="NCBI Taxonomy" id="10090"/>
    <lineage>
        <taxon>Eukaryota</taxon>
        <taxon>Metazoa</taxon>
        <taxon>Chordata</taxon>
        <taxon>Craniata</taxon>
        <taxon>Vertebrata</taxon>
        <taxon>Euteleostomi</taxon>
        <taxon>Mammalia</taxon>
        <taxon>Eutheria</taxon>
        <taxon>Euarchontoglires</taxon>
        <taxon>Glires</taxon>
        <taxon>Rodentia</taxon>
        <taxon>Myomorpha</taxon>
        <taxon>Muroidea</taxon>
        <taxon>Muridae</taxon>
        <taxon>Murinae</taxon>
        <taxon>Mus</taxon>
        <taxon>Mus</taxon>
    </lineage>
</organism>
<accession>P15973</accession>
<sequence length="60" mass="6756">MPIVCFDPPYELYLHWPLAGEVQSQYWGTGDRGISGAHWPAPGSLREAVSEKKKIIKKDT</sequence>
<gene>
    <name type="primary">Phxr1</name>
</gene>
<keyword id="KW-1185">Reference proteome</keyword>
<reference key="1">
    <citation type="journal article" date="1988" name="Nucleic Acids Res.">
        <title>Mouse spleen derived cDNA clones containing per repeat sequence.</title>
        <authorList>
            <person name="Nishimatsu S."/>
            <person name="Murakami K."/>
            <person name="Mitsui Y."/>
            <person name="Ishida N."/>
        </authorList>
    </citation>
    <scope>NUCLEOTIDE SEQUENCE [MRNA]</scope>
    <source>
        <tissue>Spleen</tissue>
    </source>
</reference>
<dbReference type="EMBL" id="X12809">
    <property type="protein sequence ID" value="CAB45190.1"/>
    <property type="molecule type" value="mRNA"/>
</dbReference>
<dbReference type="PIR" id="S02189">
    <property type="entry name" value="S02189"/>
</dbReference>
<dbReference type="AGR" id="MGI:104525"/>
<dbReference type="MGI" id="MGI:104525">
    <property type="gene designation" value="Phxr1"/>
</dbReference>
<dbReference type="InParanoid" id="P15973"/>
<dbReference type="PRO" id="PR:P15973"/>
<dbReference type="Proteomes" id="UP000000589">
    <property type="component" value="Unplaced"/>
</dbReference>
<dbReference type="RNAct" id="P15973">
    <property type="molecule type" value="protein"/>
</dbReference>
<name>PHXR1_MOUSE</name>
<protein>
    <recommendedName>
        <fullName>Putative per-hexamer repeat protein 1</fullName>
    </recommendedName>
</protein>
<feature type="chain" id="PRO_0000058412" description="Putative per-hexamer repeat protein 1">
    <location>
        <begin position="1"/>
        <end position="60"/>
    </location>
</feature>
<proteinExistence type="predicted"/>